<accession>Q9FX25</accession>
<accession>Q5IRM9</accession>
<accession>Q5IRX4</accession>
<accession>Q9XIC3</accession>
<comment type="function">
    <text evidence="4">Auxin response factors (ARFs) are transcriptional factors that bind specifically to the DNA sequence 5'-TGTCTC-3' found in the auxin-responsive promoter elements (AuxREs). Could act as transcriptional activator or repressor. Formation of heterodimers with Aux/IAA proteins may alter their ability to modulate early auxin response genes expression.</text>
</comment>
<comment type="subunit">
    <text evidence="1">Homodimers and heterodimers.</text>
</comment>
<comment type="subcellular location">
    <subcellularLocation>
        <location>Nucleus</location>
    </subcellularLocation>
</comment>
<comment type="alternative products">
    <event type="alternative splicing"/>
    <isoform>
        <id>Q9FX25-1</id>
        <name>1</name>
        <sequence type="displayed"/>
    </isoform>
    <isoform>
        <id>Q9FX25-2</id>
        <name>2</name>
        <sequence type="described" ref="VSP_025787 VSP_025788"/>
    </isoform>
    <isoform>
        <id>Q9FX25-3</id>
        <name>3</name>
        <sequence type="described" ref="VSP_025786 VSP_025787 VSP_025788"/>
    </isoform>
</comment>
<comment type="domain">
    <text>Interactions between auxin response factors (ARFs) and Aux/IAA proteins occur through their C-terminal dimerization domains III and IV.</text>
</comment>
<comment type="similarity">
    <text evidence="6">Belongs to the ARF family.</text>
</comment>
<comment type="sequence caution" evidence="6">
    <conflict type="erroneous gene model prediction">
        <sequence resource="EMBL-CDS" id="AAD39616"/>
    </conflict>
</comment>
<comment type="sequence caution" evidence="6">
    <conflict type="erroneous gene model prediction">
        <sequence resource="EMBL-CDS" id="AAG12520"/>
    </conflict>
</comment>
<dbReference type="EMBL" id="AY669793">
    <property type="protein sequence ID" value="AAT67077.1"/>
    <property type="molecule type" value="mRNA"/>
</dbReference>
<dbReference type="EMBL" id="AY680406">
    <property type="protein sequence ID" value="AAT77165.1"/>
    <property type="molecule type" value="mRNA"/>
</dbReference>
<dbReference type="EMBL" id="AC007454">
    <property type="protein sequence ID" value="AAD39616.1"/>
    <property type="status" value="ALT_SEQ"/>
    <property type="molecule type" value="Genomic_DNA"/>
</dbReference>
<dbReference type="EMBL" id="AC015446">
    <property type="protein sequence ID" value="AAG12520.1"/>
    <property type="status" value="ALT_SEQ"/>
    <property type="molecule type" value="Genomic_DNA"/>
</dbReference>
<dbReference type="EMBL" id="CP002684">
    <property type="protein sequence ID" value="AEE31679.1"/>
    <property type="molecule type" value="Genomic_DNA"/>
</dbReference>
<dbReference type="EMBL" id="CP002684">
    <property type="protein sequence ID" value="AEE31680.1"/>
    <property type="molecule type" value="Genomic_DNA"/>
</dbReference>
<dbReference type="PIR" id="H86465">
    <property type="entry name" value="H86465"/>
</dbReference>
<dbReference type="RefSeq" id="NP_001031139.1">
    <molecule id="Q9FX25-3"/>
    <property type="nucleotide sequence ID" value="NM_001036062.1"/>
</dbReference>
<dbReference type="RefSeq" id="NP_174679.3">
    <molecule id="Q9FX25-2"/>
    <property type="nucleotide sequence ID" value="NM_103140.3"/>
</dbReference>
<dbReference type="SMR" id="Q9FX25"/>
<dbReference type="BioGRID" id="25548">
    <property type="interactions" value="2"/>
</dbReference>
<dbReference type="IntAct" id="Q9FX25">
    <property type="interactions" value="1"/>
</dbReference>
<dbReference type="STRING" id="3702.Q9FX25"/>
<dbReference type="PeptideAtlas" id="Q9FX25"/>
<dbReference type="EnsemblPlants" id="AT1G34170.1">
    <molecule id="Q9FX25-2"/>
    <property type="protein sequence ID" value="AT1G34170.1"/>
    <property type="gene ID" value="AT1G34170"/>
</dbReference>
<dbReference type="EnsemblPlants" id="AT1G34170.2">
    <molecule id="Q9FX25-3"/>
    <property type="protein sequence ID" value="AT1G34170.2"/>
    <property type="gene ID" value="AT1G34170"/>
</dbReference>
<dbReference type="GeneID" id="840316"/>
<dbReference type="Gramene" id="AT1G34170.1">
    <molecule id="Q9FX25-2"/>
    <property type="protein sequence ID" value="AT1G34170.1"/>
    <property type="gene ID" value="AT1G34170"/>
</dbReference>
<dbReference type="Gramene" id="AT1G34170.2">
    <molecule id="Q9FX25-3"/>
    <property type="protein sequence ID" value="AT1G34170.2"/>
    <property type="gene ID" value="AT1G34170"/>
</dbReference>
<dbReference type="KEGG" id="ath:AT1G34170"/>
<dbReference type="Araport" id="AT1G34170"/>
<dbReference type="TAIR" id="AT1G34170">
    <property type="gene designation" value="ARF13"/>
</dbReference>
<dbReference type="InParanoid" id="Q9FX25"/>
<dbReference type="PhylomeDB" id="Q9FX25"/>
<dbReference type="PRO" id="PR:Q9FX25"/>
<dbReference type="Proteomes" id="UP000006548">
    <property type="component" value="Chromosome 1"/>
</dbReference>
<dbReference type="ExpressionAtlas" id="Q9FX25">
    <property type="expression patterns" value="baseline and differential"/>
</dbReference>
<dbReference type="GO" id="GO:0005634">
    <property type="term" value="C:nucleus"/>
    <property type="evidence" value="ECO:0007669"/>
    <property type="project" value="UniProtKB-SubCell"/>
</dbReference>
<dbReference type="GO" id="GO:0003677">
    <property type="term" value="F:DNA binding"/>
    <property type="evidence" value="ECO:0007669"/>
    <property type="project" value="UniProtKB-KW"/>
</dbReference>
<dbReference type="GO" id="GO:0009734">
    <property type="term" value="P:auxin-activated signaling pathway"/>
    <property type="evidence" value="ECO:0007669"/>
    <property type="project" value="UniProtKB-KW"/>
</dbReference>
<dbReference type="GO" id="GO:0006355">
    <property type="term" value="P:regulation of DNA-templated transcription"/>
    <property type="evidence" value="ECO:0007669"/>
    <property type="project" value="InterPro"/>
</dbReference>
<dbReference type="CDD" id="cd10017">
    <property type="entry name" value="B3_DNA"/>
    <property type="match status" value="1"/>
</dbReference>
<dbReference type="FunFam" id="2.30.30.1040:FF:000001">
    <property type="entry name" value="Auxin response factor"/>
    <property type="match status" value="1"/>
</dbReference>
<dbReference type="Gene3D" id="2.30.30.1040">
    <property type="match status" value="1"/>
</dbReference>
<dbReference type="Gene3D" id="2.40.330.10">
    <property type="entry name" value="DNA-binding pseudobarrel domain"/>
    <property type="match status" value="1"/>
</dbReference>
<dbReference type="Gene3D" id="3.10.20.90">
    <property type="entry name" value="Phosphatidylinositol 3-kinase Catalytic Subunit, Chain A, domain 1"/>
    <property type="match status" value="1"/>
</dbReference>
<dbReference type="InterPro" id="IPR010525">
    <property type="entry name" value="ARF_dom"/>
</dbReference>
<dbReference type="InterPro" id="IPR044835">
    <property type="entry name" value="ARF_plant"/>
</dbReference>
<dbReference type="InterPro" id="IPR033389">
    <property type="entry name" value="AUX/IAA_dom"/>
</dbReference>
<dbReference type="InterPro" id="IPR003340">
    <property type="entry name" value="B3_DNA-bd"/>
</dbReference>
<dbReference type="InterPro" id="IPR015300">
    <property type="entry name" value="DNA-bd_pseudobarrel_sf"/>
</dbReference>
<dbReference type="InterPro" id="IPR053793">
    <property type="entry name" value="PB1-like"/>
</dbReference>
<dbReference type="PANTHER" id="PTHR31384:SF164">
    <property type="entry name" value="AUXIN RESPONSE FACTOR 12-RELATED"/>
    <property type="match status" value="1"/>
</dbReference>
<dbReference type="PANTHER" id="PTHR31384">
    <property type="entry name" value="AUXIN RESPONSE FACTOR 4-RELATED"/>
    <property type="match status" value="1"/>
</dbReference>
<dbReference type="Pfam" id="PF06507">
    <property type="entry name" value="ARF_AD"/>
    <property type="match status" value="1"/>
</dbReference>
<dbReference type="Pfam" id="PF02309">
    <property type="entry name" value="AUX_IAA"/>
    <property type="match status" value="1"/>
</dbReference>
<dbReference type="Pfam" id="PF02362">
    <property type="entry name" value="B3"/>
    <property type="match status" value="1"/>
</dbReference>
<dbReference type="SMART" id="SM01019">
    <property type="entry name" value="B3"/>
    <property type="match status" value="1"/>
</dbReference>
<dbReference type="SUPFAM" id="SSF54277">
    <property type="entry name" value="CAD &amp; PB1 domains"/>
    <property type="match status" value="1"/>
</dbReference>
<dbReference type="SUPFAM" id="SSF101936">
    <property type="entry name" value="DNA-binding pseudobarrel domain"/>
    <property type="match status" value="1"/>
</dbReference>
<dbReference type="PROSITE" id="PS50863">
    <property type="entry name" value="B3"/>
    <property type="match status" value="1"/>
</dbReference>
<dbReference type="PROSITE" id="PS51745">
    <property type="entry name" value="PB1"/>
    <property type="match status" value="1"/>
</dbReference>
<keyword id="KW-0025">Alternative splicing</keyword>
<keyword id="KW-0927">Auxin signaling pathway</keyword>
<keyword id="KW-0238">DNA-binding</keyword>
<keyword id="KW-0539">Nucleus</keyword>
<keyword id="KW-1185">Reference proteome</keyword>
<keyword id="KW-0804">Transcription</keyword>
<keyword id="KW-0805">Transcription regulation</keyword>
<reference key="1">
    <citation type="journal article" date="2005" name="Plant Cell">
        <title>Functional genomic analysis of the AUXIN RESPONSE FACTOR gene family members in Arabidopsis thaliana: unique and overlapping functions of ARF7 and ARF19.</title>
        <authorList>
            <person name="Okushima Y."/>
            <person name="Overvoorde P.J."/>
            <person name="Arima K."/>
            <person name="Alonso J.M."/>
            <person name="Chan A."/>
            <person name="Chang C."/>
            <person name="Ecker J.R."/>
            <person name="Hughes B."/>
            <person name="Lui A."/>
            <person name="Nguyen D."/>
            <person name="Onodera C."/>
            <person name="Quach H."/>
            <person name="Smith A."/>
            <person name="Yu G."/>
            <person name="Theologis A."/>
        </authorList>
    </citation>
    <scope>NUCLEOTIDE SEQUENCE [MRNA] (ISOFORMS 2 AND 3)</scope>
    <source>
        <strain>cv. Columbia</strain>
    </source>
</reference>
<reference key="2">
    <citation type="journal article" date="2000" name="Nature">
        <title>Sequence and analysis of chromosome 1 of the plant Arabidopsis thaliana.</title>
        <authorList>
            <person name="Theologis A."/>
            <person name="Ecker J.R."/>
            <person name="Palm C.J."/>
            <person name="Federspiel N.A."/>
            <person name="Kaul S."/>
            <person name="White O."/>
            <person name="Alonso J."/>
            <person name="Altafi H."/>
            <person name="Araujo R."/>
            <person name="Bowman C.L."/>
            <person name="Brooks S.Y."/>
            <person name="Buehler E."/>
            <person name="Chan A."/>
            <person name="Chao Q."/>
            <person name="Chen H."/>
            <person name="Cheuk R.F."/>
            <person name="Chin C.W."/>
            <person name="Chung M.K."/>
            <person name="Conn L."/>
            <person name="Conway A.B."/>
            <person name="Conway A.R."/>
            <person name="Creasy T.H."/>
            <person name="Dewar K."/>
            <person name="Dunn P."/>
            <person name="Etgu P."/>
            <person name="Feldblyum T.V."/>
            <person name="Feng J.-D."/>
            <person name="Fong B."/>
            <person name="Fujii C.Y."/>
            <person name="Gill J.E."/>
            <person name="Goldsmith A.D."/>
            <person name="Haas B."/>
            <person name="Hansen N.F."/>
            <person name="Hughes B."/>
            <person name="Huizar L."/>
            <person name="Hunter J.L."/>
            <person name="Jenkins J."/>
            <person name="Johnson-Hopson C."/>
            <person name="Khan S."/>
            <person name="Khaykin E."/>
            <person name="Kim C.J."/>
            <person name="Koo H.L."/>
            <person name="Kremenetskaia I."/>
            <person name="Kurtz D.B."/>
            <person name="Kwan A."/>
            <person name="Lam B."/>
            <person name="Langin-Hooper S."/>
            <person name="Lee A."/>
            <person name="Lee J.M."/>
            <person name="Lenz C.A."/>
            <person name="Li J.H."/>
            <person name="Li Y.-P."/>
            <person name="Lin X."/>
            <person name="Liu S.X."/>
            <person name="Liu Z.A."/>
            <person name="Luros J.S."/>
            <person name="Maiti R."/>
            <person name="Marziali A."/>
            <person name="Militscher J."/>
            <person name="Miranda M."/>
            <person name="Nguyen M."/>
            <person name="Nierman W.C."/>
            <person name="Osborne B.I."/>
            <person name="Pai G."/>
            <person name="Peterson J."/>
            <person name="Pham P.K."/>
            <person name="Rizzo M."/>
            <person name="Rooney T."/>
            <person name="Rowley D."/>
            <person name="Sakano H."/>
            <person name="Salzberg S.L."/>
            <person name="Schwartz J.R."/>
            <person name="Shinn P."/>
            <person name="Southwick A.M."/>
            <person name="Sun H."/>
            <person name="Tallon L.J."/>
            <person name="Tambunga G."/>
            <person name="Toriumi M.J."/>
            <person name="Town C.D."/>
            <person name="Utterback T."/>
            <person name="Van Aken S."/>
            <person name="Vaysberg M."/>
            <person name="Vysotskaia V.S."/>
            <person name="Walker M."/>
            <person name="Wu D."/>
            <person name="Yu G."/>
            <person name="Fraser C.M."/>
            <person name="Venter J.C."/>
            <person name="Davis R.W."/>
        </authorList>
    </citation>
    <scope>NUCLEOTIDE SEQUENCE [LARGE SCALE GENOMIC DNA]</scope>
    <source>
        <strain>cv. Columbia</strain>
    </source>
</reference>
<reference key="3">
    <citation type="journal article" date="2017" name="Plant J.">
        <title>Araport11: a complete reannotation of the Arabidopsis thaliana reference genome.</title>
        <authorList>
            <person name="Cheng C.Y."/>
            <person name="Krishnakumar V."/>
            <person name="Chan A.P."/>
            <person name="Thibaud-Nissen F."/>
            <person name="Schobel S."/>
            <person name="Town C.D."/>
        </authorList>
    </citation>
    <scope>GENOME REANNOTATION</scope>
    <source>
        <strain>cv. Columbia</strain>
    </source>
</reference>
<reference key="4">
    <citation type="journal article" date="2002" name="Plant Mol. Biol.">
        <title>Auxin-responsive gene expression: genes, promoters and regulatory factors.</title>
        <authorList>
            <person name="Hagen G."/>
            <person name="Guilfoyle T.J."/>
        </authorList>
    </citation>
    <scope>GENE FAMILY</scope>
    <scope>NOMENCLATURE</scope>
    <scope>FUNCTION</scope>
</reference>
<reference key="5">
    <citation type="journal article" date="2008" name="Trends Plant Sci.">
        <title>The plant B3 superfamily.</title>
        <authorList>
            <person name="Swaminathan K."/>
            <person name="Peterson K."/>
            <person name="Jack T."/>
        </authorList>
    </citation>
    <scope>GENE FAMILY</scope>
</reference>
<feature type="chain" id="PRO_0000111517" description="Auxin response factor 13">
    <location>
        <begin position="1"/>
        <end position="621"/>
    </location>
</feature>
<feature type="domain" description="PB1" evidence="3">
    <location>
        <begin position="508"/>
        <end position="600"/>
    </location>
</feature>
<feature type="DNA-binding region" description="TF-B3" evidence="2">
    <location>
        <begin position="124"/>
        <end position="228"/>
    </location>
</feature>
<feature type="splice variant" id="VSP_025786" description="In isoform 3." evidence="5">
    <location>
        <begin position="269"/>
        <end position="294"/>
    </location>
</feature>
<feature type="splice variant" id="VSP_025787" description="In isoform 2 and isoform 3." evidence="5">
    <original>LPQDKKFDQTQPLRSPKEVQSTEFN</original>
    <variation>EISKLKNQKATTSCLKIKSLTKPNL</variation>
    <location>
        <begin position="481"/>
        <end position="505"/>
    </location>
</feature>
<feature type="splice variant" id="VSP_025788" description="In isoform 2 and isoform 3." evidence="5">
    <location>
        <begin position="506"/>
        <end position="621"/>
    </location>
</feature>
<evidence type="ECO:0000250" key="1"/>
<evidence type="ECO:0000255" key="2">
    <source>
        <dbReference type="PROSITE-ProRule" id="PRU00326"/>
    </source>
</evidence>
<evidence type="ECO:0000255" key="3">
    <source>
        <dbReference type="PROSITE-ProRule" id="PRU01081"/>
    </source>
</evidence>
<evidence type="ECO:0000269" key="4">
    <source>
    </source>
</evidence>
<evidence type="ECO:0000303" key="5">
    <source>
    </source>
</evidence>
<evidence type="ECO:0000305" key="6"/>
<sequence>MENNGEMNAQPELSVDITKTYMYEKLWNICAGPLCVLPKPGEKVYYFPQGHIELIENSTRDELDHIRPIFDLPSKLRCRVVAIDRKVDKNTDEVYAQISLMPDTTEVMTHNTTMDTRRPIVYFFSKILTASDVSLSGGLIIPKQYAIECFPPLDMSQPISTQNLVAKDLYGQEWSFKHVFRGTPQRHMFTSGGGWSVFATTKRLIVGDIFVLLRGENGELRFGIRRAKHQQGHIPSSVISANCMQHGVIASVVNAFKTKCMFNVVYKPSSSQFVISYDKFVDAMNNNYIVGSRFRMQFEGKDFSEKRYDGTIIGVNDMSPHWKDSEWRSLKVQWDELSPFLRPNQVSPWDIEHLIPSSDISQSSLKKKKHWLQLNEIGATLSNLWTCQEIGQRSMNSPISVPEFSYPNAIEDSKFLSGLLLNHSLLAIPNENYNSDQMIQPRKEDITTEATTSCLLFGVDLTKVSKSKDSICPIESCKKSLPQDKKFDQTQPLRSPKEVQSTEFNFTRSRIKVHMQGVAISRAVDLTAMHGYNQLIQKLEELFDLKDELRTRNQWEIVFTNNEGAEMLVGDDPWPEFCNMAKRIFICSKEEIKKMKLKNKFFQPESKALTSSDVPPNVTDN</sequence>
<name>ARFM_ARATH</name>
<protein>
    <recommendedName>
        <fullName>Auxin response factor 13</fullName>
    </recommendedName>
</protein>
<organism>
    <name type="scientific">Arabidopsis thaliana</name>
    <name type="common">Mouse-ear cress</name>
    <dbReference type="NCBI Taxonomy" id="3702"/>
    <lineage>
        <taxon>Eukaryota</taxon>
        <taxon>Viridiplantae</taxon>
        <taxon>Streptophyta</taxon>
        <taxon>Embryophyta</taxon>
        <taxon>Tracheophyta</taxon>
        <taxon>Spermatophyta</taxon>
        <taxon>Magnoliopsida</taxon>
        <taxon>eudicotyledons</taxon>
        <taxon>Gunneridae</taxon>
        <taxon>Pentapetalae</taxon>
        <taxon>rosids</taxon>
        <taxon>malvids</taxon>
        <taxon>Brassicales</taxon>
        <taxon>Brassicaceae</taxon>
        <taxon>Camelineae</taxon>
        <taxon>Arabidopsis</taxon>
    </lineage>
</organism>
<gene>
    <name type="primary">ARF13</name>
    <name type="ordered locus">At1g34170</name>
    <name type="ORF">F12G12.1</name>
    <name type="ORF">F23M19.15</name>
</gene>
<proteinExistence type="evidence at transcript level"/>